<name>RNB_CROS8</name>
<gene>
    <name evidence="2" type="primary">rnb</name>
    <name type="ordered locus">ESA_01589</name>
</gene>
<reference key="1">
    <citation type="journal article" date="2010" name="PLoS ONE">
        <title>Genome sequence of Cronobacter sakazakii BAA-894 and comparative genomic hybridization analysis with other Cronobacter species.</title>
        <authorList>
            <person name="Kucerova E."/>
            <person name="Clifton S.W."/>
            <person name="Xia X.Q."/>
            <person name="Long F."/>
            <person name="Porwollik S."/>
            <person name="Fulton L."/>
            <person name="Fronick C."/>
            <person name="Minx P."/>
            <person name="Kyung K."/>
            <person name="Warren W."/>
            <person name="Fulton R."/>
            <person name="Feng D."/>
            <person name="Wollam A."/>
            <person name="Shah N."/>
            <person name="Bhonagiri V."/>
            <person name="Nash W.E."/>
            <person name="Hallsworth-Pepin K."/>
            <person name="Wilson R.K."/>
            <person name="McClelland M."/>
            <person name="Forsythe S.J."/>
        </authorList>
    </citation>
    <scope>NUCLEOTIDE SEQUENCE [LARGE SCALE GENOMIC DNA]</scope>
    <source>
        <strain>ATCC BAA-894</strain>
    </source>
</reference>
<proteinExistence type="inferred from homology"/>
<evidence type="ECO:0000255" key="1"/>
<evidence type="ECO:0000255" key="2">
    <source>
        <dbReference type="HAMAP-Rule" id="MF_01036"/>
    </source>
</evidence>
<feature type="chain" id="PRO_1000063889" description="Exoribonuclease 2">
    <location>
        <begin position="1"/>
        <end position="644"/>
    </location>
</feature>
<feature type="domain" description="RNB" evidence="1">
    <location>
        <begin position="189"/>
        <end position="516"/>
    </location>
</feature>
<feature type="domain" description="S1 motif" evidence="2">
    <location>
        <begin position="561"/>
        <end position="643"/>
    </location>
</feature>
<accession>A7MMD8</accession>
<comment type="function">
    <text evidence="2">Involved in mRNA degradation. Hydrolyzes single-stranded polyribonucleotides processively in the 3' to 5' direction.</text>
</comment>
<comment type="catalytic activity">
    <reaction evidence="2">
        <text>Exonucleolytic cleavage in the 3'- to 5'-direction to yield nucleoside 5'-phosphates.</text>
        <dbReference type="EC" id="3.1.13.1"/>
    </reaction>
</comment>
<comment type="subcellular location">
    <subcellularLocation>
        <location evidence="2">Cytoplasm</location>
    </subcellularLocation>
</comment>
<comment type="similarity">
    <text evidence="2">Belongs to the RNR ribonuclease family. RNase II subfamily.</text>
</comment>
<protein>
    <recommendedName>
        <fullName evidence="2">Exoribonuclease 2</fullName>
        <ecNumber evidence="2">3.1.13.1</ecNumber>
    </recommendedName>
    <alternativeName>
        <fullName evidence="2">Exoribonuclease II</fullName>
        <shortName evidence="2">RNase II</shortName>
        <shortName evidence="2">Ribonuclease II</shortName>
    </alternativeName>
</protein>
<keyword id="KW-0963">Cytoplasm</keyword>
<keyword id="KW-0269">Exonuclease</keyword>
<keyword id="KW-0378">Hydrolase</keyword>
<keyword id="KW-0540">Nuclease</keyword>
<keyword id="KW-1185">Reference proteome</keyword>
<keyword id="KW-0694">RNA-binding</keyword>
<sequence>MFQDNPLLAQLKQQLHSQTPRAEGVVKATEKGFGFLEVDAQKSYFIPPPQMKKVMHGDRVIAVIHTEKEKESAEPEELIEPFLTRFVGRVQKKDDRLSIVPDHPLLKDAIPCRAERGVSHDFQNGDWAVAEMRRHPLKGDRGFYAELTQFITFGEDHFVPWWVTLARHNLEREAPDGVATEMLDENLTREDLTALDFVTIDSASTEDMDDALYVEALDGDRLQLTVAIADPTAWIAEGSKLDNIAKVRAFTNYLPGFNIPMLPRELSDDLCSLREGVQRPALVCRMIIEADGAISDDIHFFAAIIESKAKLAYDDVSDWLEEKGDWQPGSEAIAAQIRLLQQICQRRSAWRTEHALVFKDRPDYRFVLGEKGEVLDIVAEPRRIANRIVEESMIAANICAARVLRDKLGFGVYNVHAGFDPASTEQLATLLQSHGMHVDANDVLTLPGFCKLRRELDAQPSGFLDSRIRRFQSFAEISTEPGPHFGLGLEAYATWTSPIRKYGDMVNHRLLKAIIKGESATRPQDEATVQMAERRRLNRMAERDVGDWLYARFLKDKAGTDSRFAAEIIDVSRGGMRVRLVDNGAVAFIPAPFLHAVRDELVCSQENGTVQIKGETVYKVTDVIDVTIAEVRMETRSVIARPVA</sequence>
<organism>
    <name type="scientific">Cronobacter sakazakii (strain ATCC BAA-894)</name>
    <name type="common">Enterobacter sakazakii</name>
    <dbReference type="NCBI Taxonomy" id="290339"/>
    <lineage>
        <taxon>Bacteria</taxon>
        <taxon>Pseudomonadati</taxon>
        <taxon>Pseudomonadota</taxon>
        <taxon>Gammaproteobacteria</taxon>
        <taxon>Enterobacterales</taxon>
        <taxon>Enterobacteriaceae</taxon>
        <taxon>Cronobacter</taxon>
    </lineage>
</organism>
<dbReference type="EC" id="3.1.13.1" evidence="2"/>
<dbReference type="EMBL" id="CP000783">
    <property type="protein sequence ID" value="ABU76843.1"/>
    <property type="molecule type" value="Genomic_DNA"/>
</dbReference>
<dbReference type="RefSeq" id="WP_012124582.1">
    <property type="nucleotide sequence ID" value="NC_009778.1"/>
</dbReference>
<dbReference type="SMR" id="A7MMD8"/>
<dbReference type="KEGG" id="esa:ESA_01589"/>
<dbReference type="PATRIC" id="fig|290339.8.peg.1417"/>
<dbReference type="HOGENOM" id="CLU_002333_7_3_6"/>
<dbReference type="Proteomes" id="UP000000260">
    <property type="component" value="Chromosome"/>
</dbReference>
<dbReference type="GO" id="GO:0005829">
    <property type="term" value="C:cytosol"/>
    <property type="evidence" value="ECO:0007669"/>
    <property type="project" value="TreeGrafter"/>
</dbReference>
<dbReference type="GO" id="GO:0008859">
    <property type="term" value="F:exoribonuclease II activity"/>
    <property type="evidence" value="ECO:0007669"/>
    <property type="project" value="UniProtKB-UniRule"/>
</dbReference>
<dbReference type="GO" id="GO:0003723">
    <property type="term" value="F:RNA binding"/>
    <property type="evidence" value="ECO:0007669"/>
    <property type="project" value="UniProtKB-KW"/>
</dbReference>
<dbReference type="GO" id="GO:0006402">
    <property type="term" value="P:mRNA catabolic process"/>
    <property type="evidence" value="ECO:0007669"/>
    <property type="project" value="UniProtKB-UniRule"/>
</dbReference>
<dbReference type="FunFam" id="2.40.50.140:FF:000079">
    <property type="entry name" value="Exoribonuclease 2"/>
    <property type="match status" value="1"/>
</dbReference>
<dbReference type="FunFam" id="2.40.50.140:FF:000081">
    <property type="entry name" value="Exoribonuclease 2"/>
    <property type="match status" value="1"/>
</dbReference>
<dbReference type="FunFam" id="2.40.50.640:FF:000001">
    <property type="entry name" value="Exoribonuclease 2"/>
    <property type="match status" value="1"/>
</dbReference>
<dbReference type="Gene3D" id="2.40.50.640">
    <property type="match status" value="1"/>
</dbReference>
<dbReference type="Gene3D" id="2.40.50.140">
    <property type="entry name" value="Nucleic acid-binding proteins"/>
    <property type="match status" value="2"/>
</dbReference>
<dbReference type="HAMAP" id="MF_01036">
    <property type="entry name" value="RNase_II"/>
    <property type="match status" value="1"/>
</dbReference>
<dbReference type="InterPro" id="IPR011129">
    <property type="entry name" value="CSD"/>
</dbReference>
<dbReference type="InterPro" id="IPR012340">
    <property type="entry name" value="NA-bd_OB-fold"/>
</dbReference>
<dbReference type="InterPro" id="IPR013223">
    <property type="entry name" value="RNase_B_OB_dom"/>
</dbReference>
<dbReference type="InterPro" id="IPR011804">
    <property type="entry name" value="RNase_II"/>
</dbReference>
<dbReference type="InterPro" id="IPR001900">
    <property type="entry name" value="RNase_II/R"/>
</dbReference>
<dbReference type="InterPro" id="IPR022966">
    <property type="entry name" value="RNase_II/R_CS"/>
</dbReference>
<dbReference type="InterPro" id="IPR004476">
    <property type="entry name" value="RNase_II/RNase_R"/>
</dbReference>
<dbReference type="InterPro" id="IPR050180">
    <property type="entry name" value="RNR_Ribonuclease"/>
</dbReference>
<dbReference type="InterPro" id="IPR003029">
    <property type="entry name" value="S1_domain"/>
</dbReference>
<dbReference type="NCBIfam" id="TIGR00358">
    <property type="entry name" value="3_prime_RNase"/>
    <property type="match status" value="1"/>
</dbReference>
<dbReference type="NCBIfam" id="NF003455">
    <property type="entry name" value="PRK05054.1"/>
    <property type="match status" value="1"/>
</dbReference>
<dbReference type="NCBIfam" id="TIGR02062">
    <property type="entry name" value="RNase_B"/>
    <property type="match status" value="1"/>
</dbReference>
<dbReference type="PANTHER" id="PTHR23355:SF37">
    <property type="entry name" value="EXORIBONUCLEASE 2"/>
    <property type="match status" value="1"/>
</dbReference>
<dbReference type="PANTHER" id="PTHR23355">
    <property type="entry name" value="RIBONUCLEASE"/>
    <property type="match status" value="1"/>
</dbReference>
<dbReference type="Pfam" id="PF08206">
    <property type="entry name" value="OB_RNB"/>
    <property type="match status" value="1"/>
</dbReference>
<dbReference type="Pfam" id="PF00773">
    <property type="entry name" value="RNB"/>
    <property type="match status" value="1"/>
</dbReference>
<dbReference type="Pfam" id="PF00575">
    <property type="entry name" value="S1"/>
    <property type="match status" value="1"/>
</dbReference>
<dbReference type="SMART" id="SM00357">
    <property type="entry name" value="CSP"/>
    <property type="match status" value="1"/>
</dbReference>
<dbReference type="SMART" id="SM00955">
    <property type="entry name" value="RNB"/>
    <property type="match status" value="1"/>
</dbReference>
<dbReference type="SUPFAM" id="SSF50249">
    <property type="entry name" value="Nucleic acid-binding proteins"/>
    <property type="match status" value="4"/>
</dbReference>
<dbReference type="PROSITE" id="PS01175">
    <property type="entry name" value="RIBONUCLEASE_II"/>
    <property type="match status" value="1"/>
</dbReference>